<organism>
    <name type="scientific">Rickettsia bellii (strain OSU 85-389)</name>
    <dbReference type="NCBI Taxonomy" id="391896"/>
    <lineage>
        <taxon>Bacteria</taxon>
        <taxon>Pseudomonadati</taxon>
        <taxon>Pseudomonadota</taxon>
        <taxon>Alphaproteobacteria</taxon>
        <taxon>Rickettsiales</taxon>
        <taxon>Rickettsiaceae</taxon>
        <taxon>Rickettsieae</taxon>
        <taxon>Rickettsia</taxon>
        <taxon>belli group</taxon>
    </lineage>
</organism>
<proteinExistence type="inferred from homology"/>
<name>RL11_RICB8</name>
<protein>
    <recommendedName>
        <fullName evidence="1">Large ribosomal subunit protein uL11</fullName>
    </recommendedName>
    <alternativeName>
        <fullName evidence="2">50S ribosomal protein L11</fullName>
    </alternativeName>
</protein>
<reference key="1">
    <citation type="submission" date="2007-09" db="EMBL/GenBank/DDBJ databases">
        <title>Complete genome sequencing of Rickettsia bellii.</title>
        <authorList>
            <person name="Madan A."/>
            <person name="Lee H."/>
            <person name="Madan A."/>
            <person name="Yoon J.-G."/>
            <person name="Ryu G.-Y."/>
            <person name="Dasch G."/>
            <person name="Ereemeva M."/>
        </authorList>
    </citation>
    <scope>NUCLEOTIDE SEQUENCE [LARGE SCALE GENOMIC DNA]</scope>
    <source>
        <strain>OSU 85-389</strain>
    </source>
</reference>
<feature type="chain" id="PRO_1000046253" description="Large ribosomal subunit protein uL11">
    <location>
        <begin position="1"/>
        <end position="144"/>
    </location>
</feature>
<comment type="function">
    <text evidence="1">Forms part of the ribosomal stalk which helps the ribosome interact with GTP-bound translation factors.</text>
</comment>
<comment type="subunit">
    <text evidence="1">Part of the ribosomal stalk of the 50S ribosomal subunit. Interacts with L10 and the large rRNA to form the base of the stalk. L10 forms an elongated spine to which L12 dimers bind in a sequential fashion forming a multimeric L10(L12)X complex.</text>
</comment>
<comment type="PTM">
    <text evidence="1">One or more lysine residues are methylated.</text>
</comment>
<comment type="similarity">
    <text evidence="1">Belongs to the universal ribosomal protein uL11 family.</text>
</comment>
<accession>A8GV20</accession>
<keyword id="KW-0488">Methylation</keyword>
<keyword id="KW-0687">Ribonucleoprotein</keyword>
<keyword id="KW-0689">Ribosomal protein</keyword>
<keyword id="KW-0694">RNA-binding</keyword>
<keyword id="KW-0699">rRNA-binding</keyword>
<evidence type="ECO:0000255" key="1">
    <source>
        <dbReference type="HAMAP-Rule" id="MF_00736"/>
    </source>
</evidence>
<evidence type="ECO:0000305" key="2"/>
<dbReference type="EMBL" id="CP000849">
    <property type="protein sequence ID" value="ABV78691.1"/>
    <property type="molecule type" value="Genomic_DNA"/>
</dbReference>
<dbReference type="RefSeq" id="WP_011477816.1">
    <property type="nucleotide sequence ID" value="NC_009883.1"/>
</dbReference>
<dbReference type="SMR" id="A8GV20"/>
<dbReference type="KEGG" id="rbo:A1I_01495"/>
<dbReference type="HOGENOM" id="CLU_074237_2_0_5"/>
<dbReference type="GO" id="GO:0022625">
    <property type="term" value="C:cytosolic large ribosomal subunit"/>
    <property type="evidence" value="ECO:0007669"/>
    <property type="project" value="TreeGrafter"/>
</dbReference>
<dbReference type="GO" id="GO:0070180">
    <property type="term" value="F:large ribosomal subunit rRNA binding"/>
    <property type="evidence" value="ECO:0007669"/>
    <property type="project" value="UniProtKB-UniRule"/>
</dbReference>
<dbReference type="GO" id="GO:0003735">
    <property type="term" value="F:structural constituent of ribosome"/>
    <property type="evidence" value="ECO:0007669"/>
    <property type="project" value="InterPro"/>
</dbReference>
<dbReference type="GO" id="GO:0006412">
    <property type="term" value="P:translation"/>
    <property type="evidence" value="ECO:0007669"/>
    <property type="project" value="UniProtKB-UniRule"/>
</dbReference>
<dbReference type="CDD" id="cd00349">
    <property type="entry name" value="Ribosomal_L11"/>
    <property type="match status" value="1"/>
</dbReference>
<dbReference type="FunFam" id="3.30.1550.10:FF:000005">
    <property type="entry name" value="50S ribosomal protein L11"/>
    <property type="match status" value="1"/>
</dbReference>
<dbReference type="Gene3D" id="1.10.10.250">
    <property type="entry name" value="Ribosomal protein L11, C-terminal domain"/>
    <property type="match status" value="1"/>
</dbReference>
<dbReference type="Gene3D" id="3.30.1550.10">
    <property type="entry name" value="Ribosomal protein L11/L12, N-terminal domain"/>
    <property type="match status" value="1"/>
</dbReference>
<dbReference type="HAMAP" id="MF_00736">
    <property type="entry name" value="Ribosomal_uL11"/>
    <property type="match status" value="1"/>
</dbReference>
<dbReference type="InterPro" id="IPR000911">
    <property type="entry name" value="Ribosomal_uL11"/>
</dbReference>
<dbReference type="InterPro" id="IPR006519">
    <property type="entry name" value="Ribosomal_uL11_bac-typ"/>
</dbReference>
<dbReference type="InterPro" id="IPR020783">
    <property type="entry name" value="Ribosomal_uL11_C"/>
</dbReference>
<dbReference type="InterPro" id="IPR036769">
    <property type="entry name" value="Ribosomal_uL11_C_sf"/>
</dbReference>
<dbReference type="InterPro" id="IPR020785">
    <property type="entry name" value="Ribosomal_uL11_CS"/>
</dbReference>
<dbReference type="InterPro" id="IPR020784">
    <property type="entry name" value="Ribosomal_uL11_N"/>
</dbReference>
<dbReference type="InterPro" id="IPR036796">
    <property type="entry name" value="Ribosomal_uL11_N_sf"/>
</dbReference>
<dbReference type="NCBIfam" id="TIGR01632">
    <property type="entry name" value="L11_bact"/>
    <property type="match status" value="1"/>
</dbReference>
<dbReference type="PANTHER" id="PTHR11661">
    <property type="entry name" value="60S RIBOSOMAL PROTEIN L12"/>
    <property type="match status" value="1"/>
</dbReference>
<dbReference type="PANTHER" id="PTHR11661:SF1">
    <property type="entry name" value="LARGE RIBOSOMAL SUBUNIT PROTEIN UL11M"/>
    <property type="match status" value="1"/>
</dbReference>
<dbReference type="Pfam" id="PF00298">
    <property type="entry name" value="Ribosomal_L11"/>
    <property type="match status" value="1"/>
</dbReference>
<dbReference type="Pfam" id="PF03946">
    <property type="entry name" value="Ribosomal_L11_N"/>
    <property type="match status" value="1"/>
</dbReference>
<dbReference type="SMART" id="SM00649">
    <property type="entry name" value="RL11"/>
    <property type="match status" value="1"/>
</dbReference>
<dbReference type="SUPFAM" id="SSF54747">
    <property type="entry name" value="Ribosomal L11/L12e N-terminal domain"/>
    <property type="match status" value="1"/>
</dbReference>
<dbReference type="SUPFAM" id="SSF46906">
    <property type="entry name" value="Ribosomal protein L11, C-terminal domain"/>
    <property type="match status" value="1"/>
</dbReference>
<dbReference type="PROSITE" id="PS00359">
    <property type="entry name" value="RIBOSOMAL_L11"/>
    <property type="match status" value="1"/>
</dbReference>
<gene>
    <name evidence="1" type="primary">rplK</name>
    <name type="ordered locus">A1I_01495</name>
</gene>
<sequence length="144" mass="15315">MAQKIEGHINLNVNAGEATAAPPIGSTLGQRKVNIMEFCKAFNAATQSIEKGTPLPTVITIYVDKSFTFIVKTPPASYLIKKYAKVKKGSGATKKEAVVGKITMDDCREIAKLKMPDLNTKDIKAATKIICGSAASMGIEVVGN</sequence>